<organism>
    <name type="scientific">Azotobacter vinelandii (strain DJ / ATCC BAA-1303)</name>
    <dbReference type="NCBI Taxonomy" id="322710"/>
    <lineage>
        <taxon>Bacteria</taxon>
        <taxon>Pseudomonadati</taxon>
        <taxon>Pseudomonadota</taxon>
        <taxon>Gammaproteobacteria</taxon>
        <taxon>Pseudomonadales</taxon>
        <taxon>Pseudomonadaceae</taxon>
        <taxon>Azotobacter</taxon>
    </lineage>
</organism>
<name>SECB_AZOVD</name>
<evidence type="ECO:0000255" key="1">
    <source>
        <dbReference type="HAMAP-Rule" id="MF_00821"/>
    </source>
</evidence>
<reference key="1">
    <citation type="journal article" date="2009" name="J. Bacteriol.">
        <title>Genome sequence of Azotobacter vinelandii, an obligate aerobe specialized to support diverse anaerobic metabolic processes.</title>
        <authorList>
            <person name="Setubal J.C."/>
            <person name="Dos Santos P."/>
            <person name="Goldman B.S."/>
            <person name="Ertesvaag H."/>
            <person name="Espin G."/>
            <person name="Rubio L.M."/>
            <person name="Valla S."/>
            <person name="Almeida N.F."/>
            <person name="Balasubramanian D."/>
            <person name="Cromes L."/>
            <person name="Curatti L."/>
            <person name="Du Z."/>
            <person name="Godsy E."/>
            <person name="Goodner B."/>
            <person name="Hellner-Burris K."/>
            <person name="Hernandez J.A."/>
            <person name="Houmiel K."/>
            <person name="Imperial J."/>
            <person name="Kennedy C."/>
            <person name="Larson T.J."/>
            <person name="Latreille P."/>
            <person name="Ligon L.S."/>
            <person name="Lu J."/>
            <person name="Maerk M."/>
            <person name="Miller N.M."/>
            <person name="Norton S."/>
            <person name="O'Carroll I.P."/>
            <person name="Paulsen I."/>
            <person name="Raulfs E.C."/>
            <person name="Roemer R."/>
            <person name="Rosser J."/>
            <person name="Segura D."/>
            <person name="Slater S."/>
            <person name="Stricklin S.L."/>
            <person name="Studholme D.J."/>
            <person name="Sun J."/>
            <person name="Viana C.J."/>
            <person name="Wallin E."/>
            <person name="Wang B."/>
            <person name="Wheeler C."/>
            <person name="Zhu H."/>
            <person name="Dean D.R."/>
            <person name="Dixon R."/>
            <person name="Wood D."/>
        </authorList>
    </citation>
    <scope>NUCLEOTIDE SEQUENCE [LARGE SCALE GENOMIC DNA]</scope>
    <source>
        <strain>DJ / ATCC BAA-1303</strain>
    </source>
</reference>
<comment type="function">
    <text evidence="1">One of the proteins required for the normal export of preproteins out of the cell cytoplasm. It is a molecular chaperone that binds to a subset of precursor proteins, maintaining them in a translocation-competent state. It also specifically binds to its receptor SecA.</text>
</comment>
<comment type="subunit">
    <text evidence="1">Homotetramer, a dimer of dimers. One homotetramer interacts with 1 SecA dimer.</text>
</comment>
<comment type="subcellular location">
    <subcellularLocation>
        <location evidence="1">Cytoplasm</location>
    </subcellularLocation>
</comment>
<comment type="similarity">
    <text evidence="1">Belongs to the SecB family.</text>
</comment>
<accession>C1DJD9</accession>
<dbReference type="EMBL" id="CP001157">
    <property type="protein sequence ID" value="ACO76724.1"/>
    <property type="molecule type" value="Genomic_DNA"/>
</dbReference>
<dbReference type="RefSeq" id="WP_012699152.1">
    <property type="nucleotide sequence ID" value="NC_012560.1"/>
</dbReference>
<dbReference type="SMR" id="C1DJD9"/>
<dbReference type="STRING" id="322710.Avin_04700"/>
<dbReference type="EnsemblBacteria" id="ACO76724">
    <property type="protein sequence ID" value="ACO76724"/>
    <property type="gene ID" value="Avin_04700"/>
</dbReference>
<dbReference type="GeneID" id="88183899"/>
<dbReference type="KEGG" id="avn:Avin_04700"/>
<dbReference type="eggNOG" id="COG1952">
    <property type="taxonomic scope" value="Bacteria"/>
</dbReference>
<dbReference type="HOGENOM" id="CLU_111574_1_0_6"/>
<dbReference type="OrthoDB" id="9795145at2"/>
<dbReference type="Proteomes" id="UP000002424">
    <property type="component" value="Chromosome"/>
</dbReference>
<dbReference type="GO" id="GO:0005737">
    <property type="term" value="C:cytoplasm"/>
    <property type="evidence" value="ECO:0007669"/>
    <property type="project" value="UniProtKB-SubCell"/>
</dbReference>
<dbReference type="GO" id="GO:0051082">
    <property type="term" value="F:unfolded protein binding"/>
    <property type="evidence" value="ECO:0007669"/>
    <property type="project" value="InterPro"/>
</dbReference>
<dbReference type="GO" id="GO:0006457">
    <property type="term" value="P:protein folding"/>
    <property type="evidence" value="ECO:0007669"/>
    <property type="project" value="UniProtKB-UniRule"/>
</dbReference>
<dbReference type="GO" id="GO:0051262">
    <property type="term" value="P:protein tetramerization"/>
    <property type="evidence" value="ECO:0007669"/>
    <property type="project" value="InterPro"/>
</dbReference>
<dbReference type="GO" id="GO:0015031">
    <property type="term" value="P:protein transport"/>
    <property type="evidence" value="ECO:0007669"/>
    <property type="project" value="UniProtKB-UniRule"/>
</dbReference>
<dbReference type="Gene3D" id="3.10.420.10">
    <property type="entry name" value="SecB-like"/>
    <property type="match status" value="1"/>
</dbReference>
<dbReference type="HAMAP" id="MF_00821">
    <property type="entry name" value="SecB"/>
    <property type="match status" value="1"/>
</dbReference>
<dbReference type="InterPro" id="IPR003708">
    <property type="entry name" value="SecB"/>
</dbReference>
<dbReference type="InterPro" id="IPR035958">
    <property type="entry name" value="SecB-like_sf"/>
</dbReference>
<dbReference type="NCBIfam" id="NF004393">
    <property type="entry name" value="PRK05751.1-4"/>
    <property type="match status" value="1"/>
</dbReference>
<dbReference type="NCBIfam" id="TIGR00809">
    <property type="entry name" value="secB"/>
    <property type="match status" value="1"/>
</dbReference>
<dbReference type="PANTHER" id="PTHR36918">
    <property type="match status" value="1"/>
</dbReference>
<dbReference type="PANTHER" id="PTHR36918:SF1">
    <property type="entry name" value="PROTEIN-EXPORT PROTEIN SECB"/>
    <property type="match status" value="1"/>
</dbReference>
<dbReference type="Pfam" id="PF02556">
    <property type="entry name" value="SecB"/>
    <property type="match status" value="1"/>
</dbReference>
<dbReference type="PRINTS" id="PR01594">
    <property type="entry name" value="SECBCHAPRONE"/>
</dbReference>
<dbReference type="SUPFAM" id="SSF54611">
    <property type="entry name" value="SecB-like"/>
    <property type="match status" value="1"/>
</dbReference>
<gene>
    <name evidence="1" type="primary">secB</name>
    <name type="ordered locus">Avin_04700</name>
</gene>
<protein>
    <recommendedName>
        <fullName evidence="1">Protein-export protein SecB</fullName>
    </recommendedName>
</protein>
<sequence length="163" mass="17787">MTEQASNGAAQDGQNAQFSLQRIYVRDLSFEAPKAPEIFRQDWKPSVQLDLNTRQKALDGGDFYEVVLSLSVTVKTGEEVAFIAEVQQAGIFLIKGLDAEAMGHTLGAFCPSLLFPYAREALDNLVVRGSFPALMLAPVNFDVLYAQELARMQAEGQASGTVQ</sequence>
<keyword id="KW-0143">Chaperone</keyword>
<keyword id="KW-0963">Cytoplasm</keyword>
<keyword id="KW-0653">Protein transport</keyword>
<keyword id="KW-0811">Translocation</keyword>
<keyword id="KW-0813">Transport</keyword>
<proteinExistence type="inferred from homology"/>
<feature type="chain" id="PRO_1000213103" description="Protein-export protein SecB">
    <location>
        <begin position="1"/>
        <end position="163"/>
    </location>
</feature>